<keyword id="KW-0072">Autophagy</keyword>
<keyword id="KW-0256">Endoplasmic reticulum</keyword>
<keyword id="KW-0931">ER-Golgi transport</keyword>
<keyword id="KW-0472">Membrane</keyword>
<keyword id="KW-0653">Protein transport</keyword>
<keyword id="KW-1185">Reference proteome</keyword>
<keyword id="KW-0813">Transport</keyword>
<evidence type="ECO:0000250" key="1"/>
<evidence type="ECO:0000256" key="2">
    <source>
        <dbReference type="SAM" id="MobiDB-lite"/>
    </source>
</evidence>
<evidence type="ECO:0000305" key="3"/>
<proteinExistence type="inferred from homology"/>
<sequence>MSTEAKRRRNQKKKQKQKQKKAAEKMQEQASLESTLGSPIDVSIFEQQQYGGAEDAEAAGAAAARESADESRGASVESSGSTDNAIGDDRAGSAPSPYVAVGDSAAVSTAVEVSAPLQDEAFSAVDVEATESPASALPAASVEESEHVSIATPAEPSAAPVAPEAAASEENVVQMAGENGTNPEADVPIEDESNFLFGDSPHSPLPWDDGGASDPEQRPEMTEERPELPTFEEERTQHTSLLPSTSNEHKTPQEALSSEEDQAAEPEQNIGVCDGHAEDSTVDVEWEQHTSSSELFGEEHDTPHSPLPWEEQEAAAPEENRSRMEEHKESISGDERDQDVPITEDSAKTGSLPEDTVPGENTPGDIPETATSAKNVDFDSANGTGNVPVESQAHSTTHTPEEYAADSNSLFALEDDGGDFLAELSNGHDVSSQSAADMLPIDDNVPRTTFDGADALAGPAETYEPGDLFADEDTAEEPPWAQNTNPNVDTSQQLPVSRSSAELSSSQAAKETPGIEVPPPMFWDEESDSIEASNDQLAFTPVAQRGKVTLPDKKFSFLDNDDDLLNDDEEEEANAGDQPENDQENCDDDSFLDSDEEPPLLPPKAGKTTYTPSTQVLGQDRSSYDAHNLSSSMAVSPAVAAVTGQQQFLPGPPVPEKPKVGKYALPKQPNPPPQTNKGYYAPTLGGVGLEATDKPPVLSVNDESVRRLEEEKKKSDAYDFPLELVKSKPKPAKPVPVPSIPSIVTASQPASRSFSPSDAQPVFSPEKAGITPLKPTVPPVKNPYQPNFDGNYLSLVDAVNSRTSSVQQNPYAPPPVNVGPQVTSEKPYAAYEGAASGSQSQHPFPPQPLGAYGTNAPKPPLNSYNLAAAQMDSPKERRPAAYVNTSRTRAISNASVGSSGSYNSHQLPAGPTVVPPRFAFPPPQAHISPTIPALQTVGIAGAPPAVSSPGTQRRTHARSHSSVYAPANAPHASKYAPTVHPSVQQKYPSVAGPSKRSLAGNGVPDGVSNRVLPPTIQEVPVDGHALNFRQFPLFNWSQTSKIVYGLSLPIDTGNYMLGKPFPVSGIHVRNSESILVPNVILKDFPGPLIKGKTRTKDLEKWLELSIAYQRESLPGRDLTLWYVLKHKLSTSGSLRELSKILYDSDQLIPYMGQMHSHGRPTLLSHKLDPNSQMQILAHLQVGSPGAALDLALAQKDYALALVLSSLIGKDKWSEVVDTYLREEFSVSAGNNQFSVYLLALIFQVFVGNSNRVLQELTANPLKRDWAIQDWNIILAAVLNNIPKDVDPRQLPPVVMEFLVGFGVFLVQSGKLAAGAVCFVIANVPLSQNELLPHSGVKFECLGSINSLDAVLLSEVYEYYYTTINDNCPFFASLLLMKTVHASALLDYGLPTTVPKYLDVITGLLRNAPKNSAIAVSLTHQLESINLRLSGVTTAWIGKPTLSSVWGQLDKSFNKFIGGDADDFSKQPEKTVFDSFTPSASRNASMVDLNHGVTPMRPSAIKNSGVNRSHTDLPVSNKGGYAPLNAPGSNVFSVSRSNNHPHGTEHGNSMSNLHGDSQHLTHKTNYTPHRASNLISPKYPEEPQNSHLPNQQSNLPSPANGHSRNPSIPSVATPPPIFSAPPKRARGKYAATASGAVSVDQLYSDAGHSNTPTKVKSVPTCPEIAETPAALATRQATDSMTDFFAPPLLQAGLQQDRRSSAYSASSQGILPSSRRSSNISDVMLPPKKSGSGKPYRKTTVNYTPIDMEASSLAPSSVSLSQSTGDTTTEVKRARNSGEASNSSATEVADSTVLHKSPESVDTSEYSFPDESVQSWEENAEDDQDPLHTVSAISNTEVPVDKRDGERGSQNTLTKAAPYSDLAPYEHEGNAPSTESPAIKGSRVQVQVQVTPPEDFAHIQSQVVSPEKEASPTVEKGANANESSPDLHERQPYAGLGVSYNPNTGGPRPFASHQYLPRAPAVPAYSPIEENAAEEGRTDNQTKAVEKQEHAVLKRTVSGPVIGSEKLMSPALAHPIPRTSRFEPIKEIIQNDEDTFRKDKVPVIRASSNPNFNPYTPVASEQYYDDVVEDESDDSEEESERKRQEKEKEEERKREAAEKEKRKNEGGGSSRWFGWLKKDTNEKKPIKAKLGQKNNFYYDEKLKRWVNKDATEEEKQKVSTPPPPPPVVKRKMNTTPEIKPRSGSVVGGPAIRTQGAVAPVNPQDPQPCQAVVGASSALQKQASPVKPRDPAINLTSKKANGLDDLISLTAGPSNAVSRRKKKPGRGYVNVLNNL</sequence>
<gene>
    <name type="primary">SEC16</name>
    <name type="ordered locus">AGR202W</name>
</gene>
<accession>Q74ZJ8</accession>
<feature type="chain" id="PRO_0000295527" description="COPII coat assembly protein SEC16">
    <location>
        <begin position="1"/>
        <end position="2272"/>
    </location>
</feature>
<feature type="region of interest" description="Disordered" evidence="2">
    <location>
        <begin position="1"/>
        <end position="99"/>
    </location>
</feature>
<feature type="region of interest" description="Disordered" evidence="2">
    <location>
        <begin position="124"/>
        <end position="401"/>
    </location>
</feature>
<feature type="region of interest" description="Disordered" evidence="2">
    <location>
        <begin position="430"/>
        <end position="630"/>
    </location>
</feature>
<feature type="region of interest" description="Disordered" evidence="2">
    <location>
        <begin position="646"/>
        <end position="714"/>
    </location>
</feature>
<feature type="region of interest" description="Disordered" evidence="2">
    <location>
        <begin position="727"/>
        <end position="785"/>
    </location>
</feature>
<feature type="region of interest" description="Disordered" evidence="2">
    <location>
        <begin position="832"/>
        <end position="852"/>
    </location>
</feature>
<feature type="region of interest" description="Disordered" evidence="2">
    <location>
        <begin position="1488"/>
        <end position="1624"/>
    </location>
</feature>
<feature type="region of interest" description="Disordered" evidence="2">
    <location>
        <begin position="1694"/>
        <end position="1737"/>
    </location>
</feature>
<feature type="region of interest" description="Disordered" evidence="2">
    <location>
        <begin position="1750"/>
        <end position="1990"/>
    </location>
</feature>
<feature type="region of interest" description="Disordered" evidence="2">
    <location>
        <begin position="2043"/>
        <end position="2125"/>
    </location>
</feature>
<feature type="region of interest" description="Disordered" evidence="2">
    <location>
        <begin position="2146"/>
        <end position="2187"/>
    </location>
</feature>
<feature type="compositionally biased region" description="Basic residues" evidence="2">
    <location>
        <begin position="1"/>
        <end position="20"/>
    </location>
</feature>
<feature type="compositionally biased region" description="Low complexity" evidence="2">
    <location>
        <begin position="151"/>
        <end position="170"/>
    </location>
</feature>
<feature type="compositionally biased region" description="Basic and acidic residues" evidence="2">
    <location>
        <begin position="215"/>
        <end position="237"/>
    </location>
</feature>
<feature type="compositionally biased region" description="Basic and acidic residues" evidence="2">
    <location>
        <begin position="318"/>
        <end position="339"/>
    </location>
</feature>
<feature type="compositionally biased region" description="Polar residues" evidence="2">
    <location>
        <begin position="481"/>
        <end position="496"/>
    </location>
</feature>
<feature type="compositionally biased region" description="Low complexity" evidence="2">
    <location>
        <begin position="497"/>
        <end position="509"/>
    </location>
</feature>
<feature type="compositionally biased region" description="Acidic residues" evidence="2">
    <location>
        <begin position="559"/>
        <end position="598"/>
    </location>
</feature>
<feature type="compositionally biased region" description="Polar residues" evidence="2">
    <location>
        <begin position="608"/>
        <end position="621"/>
    </location>
</feature>
<feature type="compositionally biased region" description="Basic and acidic residues" evidence="2">
    <location>
        <begin position="703"/>
        <end position="714"/>
    </location>
</feature>
<feature type="compositionally biased region" description="Polar residues" evidence="2">
    <location>
        <begin position="748"/>
        <end position="758"/>
    </location>
</feature>
<feature type="compositionally biased region" description="Polar residues" evidence="2">
    <location>
        <begin position="1526"/>
        <end position="1554"/>
    </location>
</feature>
<feature type="compositionally biased region" description="Polar residues" evidence="2">
    <location>
        <begin position="1582"/>
        <end position="1609"/>
    </location>
</feature>
<feature type="compositionally biased region" description="Polar residues" evidence="2">
    <location>
        <begin position="1699"/>
        <end position="1719"/>
    </location>
</feature>
<feature type="compositionally biased region" description="Low complexity" evidence="2">
    <location>
        <begin position="1750"/>
        <end position="1761"/>
    </location>
</feature>
<feature type="compositionally biased region" description="Polar residues" evidence="2">
    <location>
        <begin position="1798"/>
        <end position="1815"/>
    </location>
</feature>
<feature type="compositionally biased region" description="Basic and acidic residues" evidence="2">
    <location>
        <begin position="1972"/>
        <end position="1990"/>
    </location>
</feature>
<feature type="compositionally biased region" description="Acidic residues" evidence="2">
    <location>
        <begin position="2061"/>
        <end position="2076"/>
    </location>
</feature>
<feature type="compositionally biased region" description="Basic and acidic residues" evidence="2">
    <location>
        <begin position="2077"/>
        <end position="2103"/>
    </location>
</feature>
<feature type="compositionally biased region" description="Basic and acidic residues" evidence="2">
    <location>
        <begin position="2114"/>
        <end position="2123"/>
    </location>
</feature>
<feature type="compositionally biased region" description="Basic and acidic residues" evidence="2">
    <location>
        <begin position="2146"/>
        <end position="2155"/>
    </location>
</feature>
<organism>
    <name type="scientific">Eremothecium gossypii (strain ATCC 10895 / CBS 109.51 / FGSC 9923 / NRRL Y-1056)</name>
    <name type="common">Yeast</name>
    <name type="synonym">Ashbya gossypii</name>
    <dbReference type="NCBI Taxonomy" id="284811"/>
    <lineage>
        <taxon>Eukaryota</taxon>
        <taxon>Fungi</taxon>
        <taxon>Dikarya</taxon>
        <taxon>Ascomycota</taxon>
        <taxon>Saccharomycotina</taxon>
        <taxon>Saccharomycetes</taxon>
        <taxon>Saccharomycetales</taxon>
        <taxon>Saccharomycetaceae</taxon>
        <taxon>Eremothecium</taxon>
    </lineage>
</organism>
<dbReference type="EMBL" id="AE016820">
    <property type="protein sequence ID" value="AAS54692.1"/>
    <property type="molecule type" value="Genomic_DNA"/>
</dbReference>
<dbReference type="RefSeq" id="NP_986868.1">
    <property type="nucleotide sequence ID" value="NM_211930.2"/>
</dbReference>
<dbReference type="SMR" id="Q74ZJ8"/>
<dbReference type="FunCoup" id="Q74ZJ8">
    <property type="interactions" value="117"/>
</dbReference>
<dbReference type="STRING" id="284811.Q74ZJ8"/>
<dbReference type="EnsemblFungi" id="AAS54692">
    <property type="protein sequence ID" value="AAS54692"/>
    <property type="gene ID" value="AGOS_AGR202W"/>
</dbReference>
<dbReference type="GeneID" id="4623170"/>
<dbReference type="KEGG" id="ago:AGOS_AGR202W"/>
<dbReference type="eggNOG" id="KOG1913">
    <property type="taxonomic scope" value="Eukaryota"/>
</dbReference>
<dbReference type="HOGENOM" id="CLU_000768_0_0_1"/>
<dbReference type="InParanoid" id="Q74ZJ8"/>
<dbReference type="OMA" id="NQPPPIM"/>
<dbReference type="OrthoDB" id="8918678at2759"/>
<dbReference type="Proteomes" id="UP000000591">
    <property type="component" value="Chromosome VII"/>
</dbReference>
<dbReference type="GO" id="GO:0070971">
    <property type="term" value="C:endoplasmic reticulum exit site"/>
    <property type="evidence" value="ECO:0000318"/>
    <property type="project" value="GO_Central"/>
</dbReference>
<dbReference type="GO" id="GO:0005789">
    <property type="term" value="C:endoplasmic reticulum membrane"/>
    <property type="evidence" value="ECO:0007669"/>
    <property type="project" value="UniProtKB-SubCell"/>
</dbReference>
<dbReference type="GO" id="GO:0012507">
    <property type="term" value="C:ER to Golgi transport vesicle membrane"/>
    <property type="evidence" value="ECO:0000318"/>
    <property type="project" value="GO_Central"/>
</dbReference>
<dbReference type="GO" id="GO:0006914">
    <property type="term" value="P:autophagy"/>
    <property type="evidence" value="ECO:0007669"/>
    <property type="project" value="UniProtKB-KW"/>
</dbReference>
<dbReference type="GO" id="GO:0007030">
    <property type="term" value="P:Golgi organization"/>
    <property type="evidence" value="ECO:0000318"/>
    <property type="project" value="GO_Central"/>
</dbReference>
<dbReference type="GO" id="GO:0070973">
    <property type="term" value="P:protein localization to endoplasmic reticulum exit site"/>
    <property type="evidence" value="ECO:0000318"/>
    <property type="project" value="GO_Central"/>
</dbReference>
<dbReference type="GO" id="GO:0015031">
    <property type="term" value="P:protein transport"/>
    <property type="evidence" value="ECO:0007669"/>
    <property type="project" value="UniProtKB-KW"/>
</dbReference>
<dbReference type="GO" id="GO:0016192">
    <property type="term" value="P:vesicle-mediated transport"/>
    <property type="evidence" value="ECO:0007669"/>
    <property type="project" value="UniProtKB-KW"/>
</dbReference>
<dbReference type="CDD" id="cd09233">
    <property type="entry name" value="ACE1-Sec16-like"/>
    <property type="match status" value="1"/>
</dbReference>
<dbReference type="Gene3D" id="1.20.58.940">
    <property type="match status" value="1"/>
</dbReference>
<dbReference type="Gene3D" id="6.20.50.30">
    <property type="match status" value="1"/>
</dbReference>
<dbReference type="InterPro" id="IPR024468">
    <property type="entry name" value="Sec16_N"/>
</dbReference>
<dbReference type="InterPro" id="IPR024298">
    <property type="entry name" value="Sec16_Sec23-bd"/>
</dbReference>
<dbReference type="PANTHER" id="PTHR13402">
    <property type="entry name" value="RGPR-RELATED"/>
    <property type="match status" value="1"/>
</dbReference>
<dbReference type="PANTHER" id="PTHR13402:SF6">
    <property type="entry name" value="SECRETORY 16, ISOFORM I"/>
    <property type="match status" value="1"/>
</dbReference>
<dbReference type="Pfam" id="PF12935">
    <property type="entry name" value="Sec16_N"/>
    <property type="match status" value="1"/>
</dbReference>
<dbReference type="Pfam" id="PF12931">
    <property type="entry name" value="TPR_Sec16"/>
    <property type="match status" value="1"/>
</dbReference>
<name>SEC16_EREGS</name>
<comment type="function">
    <text evidence="1">Involved in the initiation of assembly of the COPII coat required for the formation of transport vesicles from the endoplasmic reticulum (ER) and the selection of cargo molecules. Also involved in autophagy (By similarity).</text>
</comment>
<comment type="subcellular location">
    <subcellularLocation>
        <location evidence="1">Endoplasmic reticulum membrane</location>
        <topology evidence="1">Peripheral membrane protein</topology>
        <orientation evidence="1">Cytoplasmic side</orientation>
    </subcellularLocation>
</comment>
<comment type="similarity">
    <text evidence="3">Belongs to the SEC16 family.</text>
</comment>
<reference key="1">
    <citation type="journal article" date="2004" name="Science">
        <title>The Ashbya gossypii genome as a tool for mapping the ancient Saccharomyces cerevisiae genome.</title>
        <authorList>
            <person name="Dietrich F.S."/>
            <person name="Voegeli S."/>
            <person name="Brachat S."/>
            <person name="Lerch A."/>
            <person name="Gates K."/>
            <person name="Steiner S."/>
            <person name="Mohr C."/>
            <person name="Poehlmann R."/>
            <person name="Luedi P."/>
            <person name="Choi S."/>
            <person name="Wing R.A."/>
            <person name="Flavier A."/>
            <person name="Gaffney T.D."/>
            <person name="Philippsen P."/>
        </authorList>
    </citation>
    <scope>NUCLEOTIDE SEQUENCE [LARGE SCALE GENOMIC DNA]</scope>
    <source>
        <strain>ATCC 10895 / CBS 109.51 / FGSC 9923 / NRRL Y-1056</strain>
    </source>
</reference>
<reference key="2">
    <citation type="journal article" date="2013" name="G3 (Bethesda)">
        <title>Genomes of Ashbya fungi isolated from insects reveal four mating-type loci, numerous translocations, lack of transposons, and distinct gene duplications.</title>
        <authorList>
            <person name="Dietrich F.S."/>
            <person name="Voegeli S."/>
            <person name="Kuo S."/>
            <person name="Philippsen P."/>
        </authorList>
    </citation>
    <scope>GENOME REANNOTATION</scope>
    <source>
        <strain>ATCC 10895 / CBS 109.51 / FGSC 9923 / NRRL Y-1056</strain>
    </source>
</reference>
<protein>
    <recommendedName>
        <fullName>COPII coat assembly protein SEC16</fullName>
    </recommendedName>
    <alternativeName>
        <fullName>Protein transport protein SEC16</fullName>
    </alternativeName>
</protein>